<name>PHYD1_HUMAN</name>
<gene>
    <name evidence="6" type="primary">PHYHD1</name>
</gene>
<accession>Q5SRE7</accession>
<accession>A6PWN9</accession>
<accession>A6PWP0</accession>
<accession>B3KT57</accession>
<accession>B4E3X8</accession>
<accession>Q5SRE9</accession>
<accession>Q5SRF0</accession>
<accession>Q7Z623</accession>
<accession>Q7Z7P9</accession>
<accession>Q96GM4</accession>
<protein>
    <recommendedName>
        <fullName evidence="4">Phytanoyl-CoA dioxygenase domain-containing protein 1</fullName>
        <shortName evidence="4">Protein PHYHD1</shortName>
        <ecNumber evidence="2">1.14.11.-</ecNumber>
    </recommendedName>
</protein>
<evidence type="ECO:0000250" key="1">
    <source>
        <dbReference type="UniProtKB" id="O14832"/>
    </source>
</evidence>
<evidence type="ECO:0000269" key="2">
    <source>
    </source>
</evidence>
<evidence type="ECO:0000303" key="3">
    <source>
    </source>
</evidence>
<evidence type="ECO:0000303" key="4">
    <source>
    </source>
</evidence>
<evidence type="ECO:0000305" key="5"/>
<evidence type="ECO:0000312" key="6">
    <source>
        <dbReference type="HGNC" id="HGNC:23396"/>
    </source>
</evidence>
<evidence type="ECO:0007744" key="7">
    <source>
    </source>
</evidence>
<evidence type="ECO:0007829" key="8">
    <source>
        <dbReference type="PDB" id="2OPW"/>
    </source>
</evidence>
<evidence type="ECO:0007829" key="9">
    <source>
        <dbReference type="PDB" id="3OBZ"/>
    </source>
</evidence>
<reference key="1">
    <citation type="journal article" date="2004" name="Nat. Genet.">
        <title>Complete sequencing and characterization of 21,243 full-length human cDNAs.</title>
        <authorList>
            <person name="Ota T."/>
            <person name="Suzuki Y."/>
            <person name="Nishikawa T."/>
            <person name="Otsuki T."/>
            <person name="Sugiyama T."/>
            <person name="Irie R."/>
            <person name="Wakamatsu A."/>
            <person name="Hayashi K."/>
            <person name="Sato H."/>
            <person name="Nagai K."/>
            <person name="Kimura K."/>
            <person name="Makita H."/>
            <person name="Sekine M."/>
            <person name="Obayashi M."/>
            <person name="Nishi T."/>
            <person name="Shibahara T."/>
            <person name="Tanaka T."/>
            <person name="Ishii S."/>
            <person name="Yamamoto J."/>
            <person name="Saito K."/>
            <person name="Kawai Y."/>
            <person name="Isono Y."/>
            <person name="Nakamura Y."/>
            <person name="Nagahari K."/>
            <person name="Murakami K."/>
            <person name="Yasuda T."/>
            <person name="Iwayanagi T."/>
            <person name="Wagatsuma M."/>
            <person name="Shiratori A."/>
            <person name="Sudo H."/>
            <person name="Hosoiri T."/>
            <person name="Kaku Y."/>
            <person name="Kodaira H."/>
            <person name="Kondo H."/>
            <person name="Sugawara M."/>
            <person name="Takahashi M."/>
            <person name="Kanda K."/>
            <person name="Yokoi T."/>
            <person name="Furuya T."/>
            <person name="Kikkawa E."/>
            <person name="Omura Y."/>
            <person name="Abe K."/>
            <person name="Kamihara K."/>
            <person name="Katsuta N."/>
            <person name="Sato K."/>
            <person name="Tanikawa M."/>
            <person name="Yamazaki M."/>
            <person name="Ninomiya K."/>
            <person name="Ishibashi T."/>
            <person name="Yamashita H."/>
            <person name="Murakawa K."/>
            <person name="Fujimori K."/>
            <person name="Tanai H."/>
            <person name="Kimata M."/>
            <person name="Watanabe M."/>
            <person name="Hiraoka S."/>
            <person name="Chiba Y."/>
            <person name="Ishida S."/>
            <person name="Ono Y."/>
            <person name="Takiguchi S."/>
            <person name="Watanabe S."/>
            <person name="Yosida M."/>
            <person name="Hotuta T."/>
            <person name="Kusano J."/>
            <person name="Kanehori K."/>
            <person name="Takahashi-Fujii A."/>
            <person name="Hara H."/>
            <person name="Tanase T.-O."/>
            <person name="Nomura Y."/>
            <person name="Togiya S."/>
            <person name="Komai F."/>
            <person name="Hara R."/>
            <person name="Takeuchi K."/>
            <person name="Arita M."/>
            <person name="Imose N."/>
            <person name="Musashino K."/>
            <person name="Yuuki H."/>
            <person name="Oshima A."/>
            <person name="Sasaki N."/>
            <person name="Aotsuka S."/>
            <person name="Yoshikawa Y."/>
            <person name="Matsunawa H."/>
            <person name="Ichihara T."/>
            <person name="Shiohata N."/>
            <person name="Sano S."/>
            <person name="Moriya S."/>
            <person name="Momiyama H."/>
            <person name="Satoh N."/>
            <person name="Takami S."/>
            <person name="Terashima Y."/>
            <person name="Suzuki O."/>
            <person name="Nakagawa S."/>
            <person name="Senoh A."/>
            <person name="Mizoguchi H."/>
            <person name="Goto Y."/>
            <person name="Shimizu F."/>
            <person name="Wakebe H."/>
            <person name="Hishigaki H."/>
            <person name="Watanabe T."/>
            <person name="Sugiyama A."/>
            <person name="Takemoto M."/>
            <person name="Kawakami B."/>
            <person name="Yamazaki M."/>
            <person name="Watanabe K."/>
            <person name="Kumagai A."/>
            <person name="Itakura S."/>
            <person name="Fukuzumi Y."/>
            <person name="Fujimori Y."/>
            <person name="Komiyama M."/>
            <person name="Tashiro H."/>
            <person name="Tanigami A."/>
            <person name="Fujiwara T."/>
            <person name="Ono T."/>
            <person name="Yamada K."/>
            <person name="Fujii Y."/>
            <person name="Ozaki K."/>
            <person name="Hirao M."/>
            <person name="Ohmori Y."/>
            <person name="Kawabata A."/>
            <person name="Hikiji T."/>
            <person name="Kobatake N."/>
            <person name="Inagaki H."/>
            <person name="Ikema Y."/>
            <person name="Okamoto S."/>
            <person name="Okitani R."/>
            <person name="Kawakami T."/>
            <person name="Noguchi S."/>
            <person name="Itoh T."/>
            <person name="Shigeta K."/>
            <person name="Senba T."/>
            <person name="Matsumura K."/>
            <person name="Nakajima Y."/>
            <person name="Mizuno T."/>
            <person name="Morinaga M."/>
            <person name="Sasaki M."/>
            <person name="Togashi T."/>
            <person name="Oyama M."/>
            <person name="Hata H."/>
            <person name="Watanabe M."/>
            <person name="Komatsu T."/>
            <person name="Mizushima-Sugano J."/>
            <person name="Satoh T."/>
            <person name="Shirai Y."/>
            <person name="Takahashi Y."/>
            <person name="Nakagawa K."/>
            <person name="Okumura K."/>
            <person name="Nagase T."/>
            <person name="Nomura N."/>
            <person name="Kikuchi H."/>
            <person name="Masuho Y."/>
            <person name="Yamashita R."/>
            <person name="Nakai K."/>
            <person name="Yada T."/>
            <person name="Nakamura Y."/>
            <person name="Ohara O."/>
            <person name="Isogai T."/>
            <person name="Sugano S."/>
        </authorList>
    </citation>
    <scope>NUCLEOTIDE SEQUENCE [LARGE SCALE MRNA] (ISOFORM 1)</scope>
    <source>
        <tissue>Hippocampus</tissue>
    </source>
</reference>
<reference key="2">
    <citation type="journal article" date="2004" name="Nature">
        <title>DNA sequence and analysis of human chromosome 9.</title>
        <authorList>
            <person name="Humphray S.J."/>
            <person name="Oliver K."/>
            <person name="Hunt A.R."/>
            <person name="Plumb R.W."/>
            <person name="Loveland J.E."/>
            <person name="Howe K.L."/>
            <person name="Andrews T.D."/>
            <person name="Searle S."/>
            <person name="Hunt S.E."/>
            <person name="Scott C.E."/>
            <person name="Jones M.C."/>
            <person name="Ainscough R."/>
            <person name="Almeida J.P."/>
            <person name="Ambrose K.D."/>
            <person name="Ashwell R.I.S."/>
            <person name="Babbage A.K."/>
            <person name="Babbage S."/>
            <person name="Bagguley C.L."/>
            <person name="Bailey J."/>
            <person name="Banerjee R."/>
            <person name="Barker D.J."/>
            <person name="Barlow K.F."/>
            <person name="Bates K."/>
            <person name="Beasley H."/>
            <person name="Beasley O."/>
            <person name="Bird C.P."/>
            <person name="Bray-Allen S."/>
            <person name="Brown A.J."/>
            <person name="Brown J.Y."/>
            <person name="Burford D."/>
            <person name="Burrill W."/>
            <person name="Burton J."/>
            <person name="Carder C."/>
            <person name="Carter N.P."/>
            <person name="Chapman J.C."/>
            <person name="Chen Y."/>
            <person name="Clarke G."/>
            <person name="Clark S.Y."/>
            <person name="Clee C.M."/>
            <person name="Clegg S."/>
            <person name="Collier R.E."/>
            <person name="Corby N."/>
            <person name="Crosier M."/>
            <person name="Cummings A.T."/>
            <person name="Davies J."/>
            <person name="Dhami P."/>
            <person name="Dunn M."/>
            <person name="Dutta I."/>
            <person name="Dyer L.W."/>
            <person name="Earthrowl M.E."/>
            <person name="Faulkner L."/>
            <person name="Fleming C.J."/>
            <person name="Frankish A."/>
            <person name="Frankland J.A."/>
            <person name="French L."/>
            <person name="Fricker D.G."/>
            <person name="Garner P."/>
            <person name="Garnett J."/>
            <person name="Ghori J."/>
            <person name="Gilbert J.G.R."/>
            <person name="Glison C."/>
            <person name="Grafham D.V."/>
            <person name="Gribble S."/>
            <person name="Griffiths C."/>
            <person name="Griffiths-Jones S."/>
            <person name="Grocock R."/>
            <person name="Guy J."/>
            <person name="Hall R.E."/>
            <person name="Hammond S."/>
            <person name="Harley J.L."/>
            <person name="Harrison E.S.I."/>
            <person name="Hart E.A."/>
            <person name="Heath P.D."/>
            <person name="Henderson C.D."/>
            <person name="Hopkins B.L."/>
            <person name="Howard P.J."/>
            <person name="Howden P.J."/>
            <person name="Huckle E."/>
            <person name="Johnson C."/>
            <person name="Johnson D."/>
            <person name="Joy A.A."/>
            <person name="Kay M."/>
            <person name="Keenan S."/>
            <person name="Kershaw J.K."/>
            <person name="Kimberley A.M."/>
            <person name="King A."/>
            <person name="Knights A."/>
            <person name="Laird G.K."/>
            <person name="Langford C."/>
            <person name="Lawlor S."/>
            <person name="Leongamornlert D.A."/>
            <person name="Leversha M."/>
            <person name="Lloyd C."/>
            <person name="Lloyd D.M."/>
            <person name="Lovell J."/>
            <person name="Martin S."/>
            <person name="Mashreghi-Mohammadi M."/>
            <person name="Matthews L."/>
            <person name="McLaren S."/>
            <person name="McLay K.E."/>
            <person name="McMurray A."/>
            <person name="Milne S."/>
            <person name="Nickerson T."/>
            <person name="Nisbett J."/>
            <person name="Nordsiek G."/>
            <person name="Pearce A.V."/>
            <person name="Peck A.I."/>
            <person name="Porter K.M."/>
            <person name="Pandian R."/>
            <person name="Pelan S."/>
            <person name="Phillimore B."/>
            <person name="Povey S."/>
            <person name="Ramsey Y."/>
            <person name="Rand V."/>
            <person name="Scharfe M."/>
            <person name="Sehra H.K."/>
            <person name="Shownkeen R."/>
            <person name="Sims S.K."/>
            <person name="Skuce C.D."/>
            <person name="Smith M."/>
            <person name="Steward C.A."/>
            <person name="Swarbreck D."/>
            <person name="Sycamore N."/>
            <person name="Tester J."/>
            <person name="Thorpe A."/>
            <person name="Tracey A."/>
            <person name="Tromans A."/>
            <person name="Thomas D.W."/>
            <person name="Wall M."/>
            <person name="Wallis J.M."/>
            <person name="West A.P."/>
            <person name="Whitehead S.L."/>
            <person name="Willey D.L."/>
            <person name="Williams S.A."/>
            <person name="Wilming L."/>
            <person name="Wray P.W."/>
            <person name="Young L."/>
            <person name="Ashurst J.L."/>
            <person name="Coulson A."/>
            <person name="Blocker H."/>
            <person name="Durbin R.M."/>
            <person name="Sulston J.E."/>
            <person name="Hubbard T."/>
            <person name="Jackson M.J."/>
            <person name="Bentley D.R."/>
            <person name="Beck S."/>
            <person name="Rogers J."/>
            <person name="Dunham I."/>
        </authorList>
    </citation>
    <scope>NUCLEOTIDE SEQUENCE [LARGE SCALE GENOMIC DNA]</scope>
</reference>
<reference key="3">
    <citation type="submission" date="2005-07" db="EMBL/GenBank/DDBJ databases">
        <authorList>
            <person name="Mural R.J."/>
            <person name="Istrail S."/>
            <person name="Sutton G.G."/>
            <person name="Florea L."/>
            <person name="Halpern A.L."/>
            <person name="Mobarry C.M."/>
            <person name="Lippert R."/>
            <person name="Walenz B."/>
            <person name="Shatkay H."/>
            <person name="Dew I."/>
            <person name="Miller J.R."/>
            <person name="Flanigan M.J."/>
            <person name="Edwards N.J."/>
            <person name="Bolanos R."/>
            <person name="Fasulo D."/>
            <person name="Halldorsson B.V."/>
            <person name="Hannenhalli S."/>
            <person name="Turner R."/>
            <person name="Yooseph S."/>
            <person name="Lu F."/>
            <person name="Nusskern D.R."/>
            <person name="Shue B.C."/>
            <person name="Zheng X.H."/>
            <person name="Zhong F."/>
            <person name="Delcher A.L."/>
            <person name="Huson D.H."/>
            <person name="Kravitz S.A."/>
            <person name="Mouchard L."/>
            <person name="Reinert K."/>
            <person name="Remington K.A."/>
            <person name="Clark A.G."/>
            <person name="Waterman M.S."/>
            <person name="Eichler E.E."/>
            <person name="Adams M.D."/>
            <person name="Hunkapiller M.W."/>
            <person name="Myers E.W."/>
            <person name="Venter J.C."/>
        </authorList>
    </citation>
    <scope>NUCLEOTIDE SEQUENCE [LARGE SCALE GENOMIC DNA]</scope>
</reference>
<reference key="4">
    <citation type="journal article" date="2004" name="Genome Res.">
        <title>The status, quality, and expansion of the NIH full-length cDNA project: the Mammalian Gene Collection (MGC).</title>
        <authorList>
            <consortium name="The MGC Project Team"/>
        </authorList>
    </citation>
    <scope>NUCLEOTIDE SEQUENCE [LARGE SCALE MRNA] (ISOFORMS 1; 2 AND 3)</scope>
    <source>
        <tissue>Lung</tissue>
        <tissue>Muscle</tissue>
    </source>
</reference>
<reference key="5">
    <citation type="journal article" date="2007" name="Science">
        <title>ATM and ATR substrate analysis reveals extensive protein networks responsive to DNA damage.</title>
        <authorList>
            <person name="Matsuoka S."/>
            <person name="Ballif B.A."/>
            <person name="Smogorzewska A."/>
            <person name="McDonald E.R. III"/>
            <person name="Hurov K.E."/>
            <person name="Luo J."/>
            <person name="Bakalarski C.E."/>
            <person name="Zhao Z."/>
            <person name="Solimini N."/>
            <person name="Lerenthal Y."/>
            <person name="Shiloh Y."/>
            <person name="Gygi S.P."/>
            <person name="Elledge S.J."/>
        </authorList>
    </citation>
    <scope>PHOSPHORYLATION [LARGE SCALE ANALYSIS] AT THR-55</scope>
    <scope>IDENTIFICATION BY MASS SPECTROMETRY [LARGE SCALE ANALYSIS]</scope>
    <source>
        <tissue>Embryonic kidney</tissue>
    </source>
</reference>
<reference key="6">
    <citation type="journal article" date="2014" name="J. Proteomics">
        <title>An enzyme assisted RP-RPLC approach for in-depth analysis of human liver phosphoproteome.</title>
        <authorList>
            <person name="Bian Y."/>
            <person name="Song C."/>
            <person name="Cheng K."/>
            <person name="Dong M."/>
            <person name="Wang F."/>
            <person name="Huang J."/>
            <person name="Sun D."/>
            <person name="Wang L."/>
            <person name="Ye M."/>
            <person name="Zou H."/>
        </authorList>
    </citation>
    <scope>IDENTIFICATION BY MASS SPECTROMETRY [LARGE SCALE ANALYSIS]</scope>
    <source>
        <tissue>Liver</tissue>
    </source>
</reference>
<reference key="7">
    <citation type="journal article" date="2011" name="Biochem. Biophys. Res. Commun.">
        <title>Crystal structure of PHYHD1A, a 2OG oxygenase related to phytanoyl-CoA hydroxylase.</title>
        <authorList>
            <person name="Zhang Z."/>
            <person name="Kochan G.T."/>
            <person name="Ng S.S."/>
            <person name="Kavanagh K.L."/>
            <person name="Oppermann U."/>
            <person name="Schofield C.J."/>
            <person name="McDonough M.A."/>
        </authorList>
    </citation>
    <scope>X-RAY CRYSTALLOGRAPHY (1.9 ANGSTROMS) IN COMPLEX WITH IRON IONS AND ALPHA-KETOGLUTARATE</scope>
    <scope>FUNCTION</scope>
    <scope>ACTIVITY REGULATION</scope>
    <scope>COFACTOR</scope>
</reference>
<organism>
    <name type="scientific">Homo sapiens</name>
    <name type="common">Human</name>
    <dbReference type="NCBI Taxonomy" id="9606"/>
    <lineage>
        <taxon>Eukaryota</taxon>
        <taxon>Metazoa</taxon>
        <taxon>Chordata</taxon>
        <taxon>Craniata</taxon>
        <taxon>Vertebrata</taxon>
        <taxon>Euteleostomi</taxon>
        <taxon>Mammalia</taxon>
        <taxon>Eutheria</taxon>
        <taxon>Euarchontoglires</taxon>
        <taxon>Primates</taxon>
        <taxon>Haplorrhini</taxon>
        <taxon>Catarrhini</taxon>
        <taxon>Hominidae</taxon>
        <taxon>Homo</taxon>
    </lineage>
</organism>
<comment type="function">
    <text evidence="2">2-oxoglutarate(2OG)-dependent dioxygenase that catalyzes the conversion of 2-oxoglutarate to succinate and CO(2) in an iron-dependent manner (PubMed:21530488). However, does not couple 2OG turnover to the hydroxylation of acyl-coenzyme A derivatives, implying that it is not directly involved in phytanoyl coenzyme-A metabolism (PubMed:21530488). Does not show detectable activity towards fatty acid CoA thioesters (PubMed:21530488).</text>
</comment>
<comment type="function">
    <molecule>Isoform 2</molecule>
    <text evidence="2">Isoform 2 probably lacks enzyme activity.</text>
</comment>
<comment type="function">
    <molecule>Isoform 3</molecule>
    <text evidence="2">Isoform 3 probably lacks enzyme activity.</text>
</comment>
<comment type="cofactor">
    <cofactor evidence="2">
        <name>Fe cation</name>
        <dbReference type="ChEBI" id="CHEBI:24875"/>
    </cofactor>
</comment>
<comment type="activity regulation">
    <text evidence="2">Activity is increased by ascorbate. Inhibited by myristoyl-CoA.</text>
</comment>
<comment type="interaction">
    <interactant intactId="EBI-2623130">
        <id>Q5SRE7</id>
    </interactant>
    <interactant intactId="EBI-752420">
        <id>Q9NUX5</id>
        <label>POT1</label>
    </interactant>
    <organismsDiffer>false</organismsDiffer>
    <experiments>2</experiments>
</comment>
<comment type="alternative products">
    <event type="alternative splicing"/>
    <isoform>
        <id>Q5SRE7-1</id>
        <name>1</name>
        <name>A</name>
        <name>PHYHD1A</name>
        <sequence type="displayed"/>
    </isoform>
    <isoform>
        <id>Q5SRE7-2</id>
        <name>2</name>
        <name>C</name>
        <name>PHYHD1C</name>
        <sequence type="described" ref="VSP_030077"/>
    </isoform>
    <isoform>
        <id>Q5SRE7-3</id>
        <name>3</name>
        <name>B</name>
        <name>PHYHD1B</name>
        <sequence type="described" ref="VSP_030078"/>
    </isoform>
</comment>
<comment type="similarity">
    <text evidence="5">Belongs to the PhyH family. PHYHD1 subfamily.</text>
</comment>
<proteinExistence type="evidence at protein level"/>
<keyword id="KW-0002">3D-structure</keyword>
<keyword id="KW-0025">Alternative splicing</keyword>
<keyword id="KW-0223">Dioxygenase</keyword>
<keyword id="KW-0408">Iron</keyword>
<keyword id="KW-0479">Metal-binding</keyword>
<keyword id="KW-0560">Oxidoreductase</keyword>
<keyword id="KW-0597">Phosphoprotein</keyword>
<keyword id="KW-1267">Proteomics identification</keyword>
<keyword id="KW-1185">Reference proteome</keyword>
<sequence length="291" mass="32411">MACLSPSQLQKFQQDGFLVLEGFLSAEECVAMQQRIGEIVAEMDVPLHCRTEFSTQEEEQLRAQGSTDYFLSSGDKIRFFFEKGVFDEKGNFLVPPEKSINKIGHALHAHDPVFKSITHSFKVQTLARSLGLQMPVVVQSMYIFKQPHFGGEVSPHQDASFLYTEPLGRVLGVWIAVEDATLENGCLWFIPGSHTSGVSRRMVRAPVGSAPGTSFLGSEPARDNSLFVPTPVQRGALVLIHGEVVHKSKQNLSDRSRQAYTFHLMEASGTTWSPENWLQPTAELPFPQLYT</sequence>
<feature type="chain" id="PRO_0000313633" description="Phytanoyl-CoA dioxygenase domain-containing protein 1">
    <location>
        <begin position="1"/>
        <end position="291"/>
    </location>
</feature>
<feature type="binding site" evidence="1">
    <location>
        <position position="102"/>
    </location>
    <ligand>
        <name>2-oxoglutarate</name>
        <dbReference type="ChEBI" id="CHEBI:16810"/>
    </ligand>
</feature>
<feature type="binding site" evidence="1">
    <location>
        <position position="141"/>
    </location>
    <ligand>
        <name>2-oxoglutarate</name>
        <dbReference type="ChEBI" id="CHEBI:16810"/>
    </ligand>
</feature>
<feature type="binding site" evidence="1">
    <location>
        <begin position="156"/>
        <end position="158"/>
    </location>
    <ligand>
        <name>2-oxoglutarate</name>
        <dbReference type="ChEBI" id="CHEBI:16810"/>
    </ligand>
</feature>
<feature type="binding site" evidence="1">
    <location>
        <position position="156"/>
    </location>
    <ligand>
        <name>Fe cation</name>
        <dbReference type="ChEBI" id="CHEBI:24875"/>
    </ligand>
</feature>
<feature type="binding site" evidence="1">
    <location>
        <position position="158"/>
    </location>
    <ligand>
        <name>Fe cation</name>
        <dbReference type="ChEBI" id="CHEBI:24875"/>
    </ligand>
</feature>
<feature type="binding site" evidence="1">
    <location>
        <position position="174"/>
    </location>
    <ligand>
        <name>2-oxoglutarate</name>
        <dbReference type="ChEBI" id="CHEBI:16810"/>
    </ligand>
</feature>
<feature type="binding site" evidence="1">
    <location>
        <position position="246"/>
    </location>
    <ligand>
        <name>Fe cation</name>
        <dbReference type="ChEBI" id="CHEBI:24875"/>
    </ligand>
</feature>
<feature type="binding site" evidence="1">
    <location>
        <position position="248"/>
    </location>
    <ligand>
        <name>2-oxoglutarate</name>
        <dbReference type="ChEBI" id="CHEBI:16810"/>
    </ligand>
</feature>
<feature type="binding site" evidence="1">
    <location>
        <position position="257"/>
    </location>
    <ligand>
        <name>2-oxoglutarate</name>
        <dbReference type="ChEBI" id="CHEBI:16810"/>
    </ligand>
</feature>
<feature type="modified residue" description="Phosphothreonine" evidence="7">
    <location>
        <position position="55"/>
    </location>
</feature>
<feature type="splice variant" id="VSP_030077" description="In isoform 2." evidence="3">
    <location>
        <begin position="125"/>
        <end position="145"/>
    </location>
</feature>
<feature type="splice variant" id="VSP_030078" description="In isoform 3." evidence="3">
    <original>QPHFGGEVSPHQDASFLYTEPLGRVLGVWIAVEDATLENGCLWFIPGSHTSGVSRRMVRAPVGSAPGTSFLGSEPARDNSLFVPTPVQRGALVLIHGEVVHKSKQNLSDRSRQAYTFHLMEASGTTWSPENWLQPTAELPFPQLYT</original>
    <variation>SPLIRTPPSCTRSPWAGCWACGSQWRMPRWRTAVSGSSLAPTPVVCQEGWSGPLLAQRLVPASLGQSQPGITASLCPPQCREGPWSSSMEKWYTRASRTSLTARARPTLSTSWRPLAPPGARRTGSSQQLNCPFPNCTPKGSRRAGALAPPG</variation>
    <location>
        <begin position="146"/>
        <end position="291"/>
    </location>
</feature>
<feature type="sequence variant" id="VAR_050529" description="In dbSNP:rs10988159.">
    <original>R</original>
    <variation>W</variation>
    <location>
        <position position="222"/>
    </location>
</feature>
<feature type="helix" evidence="8">
    <location>
        <begin position="6"/>
        <end position="15"/>
    </location>
</feature>
<feature type="strand" evidence="8">
    <location>
        <begin position="16"/>
        <end position="20"/>
    </location>
</feature>
<feature type="helix" evidence="8">
    <location>
        <begin position="26"/>
        <end position="41"/>
    </location>
</feature>
<feature type="helix" evidence="8">
    <location>
        <begin position="47"/>
        <end position="49"/>
    </location>
</feature>
<feature type="helix" evidence="8">
    <location>
        <begin position="56"/>
        <end position="71"/>
    </location>
</feature>
<feature type="turn" evidence="8">
    <location>
        <begin position="72"/>
        <end position="75"/>
    </location>
</feature>
<feature type="strand" evidence="8">
    <location>
        <begin position="76"/>
        <end position="81"/>
    </location>
</feature>
<feature type="helix" evidence="9">
    <location>
        <begin position="83"/>
        <end position="85"/>
    </location>
</feature>
<feature type="strand" evidence="9">
    <location>
        <begin position="88"/>
        <end position="90"/>
    </location>
</feature>
<feature type="strand" evidence="8">
    <location>
        <begin position="92"/>
        <end position="94"/>
    </location>
</feature>
<feature type="helix" evidence="8">
    <location>
        <begin position="96"/>
        <end position="98"/>
    </location>
</feature>
<feature type="strand" evidence="8">
    <location>
        <begin position="99"/>
        <end position="105"/>
    </location>
</feature>
<feature type="helix" evidence="8">
    <location>
        <begin position="107"/>
        <end position="110"/>
    </location>
</feature>
<feature type="helix" evidence="8">
    <location>
        <begin position="112"/>
        <end position="118"/>
    </location>
</feature>
<feature type="helix" evidence="8">
    <location>
        <begin position="121"/>
        <end position="130"/>
    </location>
</feature>
<feature type="strand" evidence="8">
    <location>
        <begin position="133"/>
        <end position="143"/>
    </location>
</feature>
<feature type="turn" evidence="8">
    <location>
        <begin position="147"/>
        <end position="149"/>
    </location>
</feature>
<feature type="strand" evidence="8">
    <location>
        <begin position="153"/>
        <end position="156"/>
    </location>
</feature>
<feature type="helix" evidence="8">
    <location>
        <begin position="158"/>
        <end position="160"/>
    </location>
</feature>
<feature type="strand" evidence="8">
    <location>
        <begin position="164"/>
        <end position="168"/>
    </location>
</feature>
<feature type="strand" evidence="8">
    <location>
        <begin position="170"/>
        <end position="178"/>
    </location>
</feature>
<feature type="turn" evidence="8">
    <location>
        <begin position="182"/>
        <end position="185"/>
    </location>
</feature>
<feature type="strand" evidence="8">
    <location>
        <begin position="187"/>
        <end position="190"/>
    </location>
</feature>
<feature type="strand" evidence="8">
    <location>
        <begin position="194"/>
        <end position="196"/>
    </location>
</feature>
<feature type="strand" evidence="8">
    <location>
        <begin position="199"/>
        <end position="204"/>
    </location>
</feature>
<feature type="strand" evidence="9">
    <location>
        <begin position="207"/>
        <end position="209"/>
    </location>
</feature>
<feature type="strand" evidence="8">
    <location>
        <begin position="213"/>
        <end position="217"/>
    </location>
</feature>
<feature type="helix" evidence="8">
    <location>
        <begin position="224"/>
        <end position="226"/>
    </location>
</feature>
<feature type="strand" evidence="8">
    <location>
        <begin position="228"/>
        <end position="230"/>
    </location>
</feature>
<feature type="strand" evidence="8">
    <location>
        <begin position="237"/>
        <end position="241"/>
    </location>
</feature>
<feature type="strand" evidence="8">
    <location>
        <begin position="245"/>
        <end position="248"/>
    </location>
</feature>
<feature type="strand" evidence="8">
    <location>
        <begin position="253"/>
        <end position="255"/>
    </location>
</feature>
<feature type="strand" evidence="8">
    <location>
        <begin position="259"/>
        <end position="266"/>
    </location>
</feature>
<feature type="sequence conflict" description="In Ref. 4; AAH09373." evidence="5" ref="4">
    <original>E</original>
    <variation>G</variation>
    <location sequence="Q5SRE7-3">
        <position position="193"/>
    </location>
</feature>
<dbReference type="EC" id="1.14.11.-" evidence="2"/>
<dbReference type="EMBL" id="AK095000">
    <property type="protein sequence ID" value="BAG52969.1"/>
    <property type="molecule type" value="mRNA"/>
</dbReference>
<dbReference type="EMBL" id="AL672142">
    <property type="status" value="NOT_ANNOTATED_CDS"/>
    <property type="molecule type" value="Genomic_DNA"/>
</dbReference>
<dbReference type="EMBL" id="CH471090">
    <property type="protein sequence ID" value="EAW87844.1"/>
    <property type="molecule type" value="Genomic_DNA"/>
</dbReference>
<dbReference type="EMBL" id="CH471090">
    <property type="protein sequence ID" value="EAW87845.1"/>
    <property type="molecule type" value="Genomic_DNA"/>
</dbReference>
<dbReference type="EMBL" id="CH471090">
    <property type="protein sequence ID" value="EAW87847.1"/>
    <property type="molecule type" value="Genomic_DNA"/>
</dbReference>
<dbReference type="EMBL" id="BC009373">
    <property type="protein sequence ID" value="AAH09373.1"/>
    <property type="molecule type" value="mRNA"/>
</dbReference>
<dbReference type="EMBL" id="BC051300">
    <property type="protein sequence ID" value="AAH51300.1"/>
    <property type="molecule type" value="mRNA"/>
</dbReference>
<dbReference type="EMBL" id="BC053853">
    <property type="protein sequence ID" value="AAH53853.1"/>
    <property type="molecule type" value="mRNA"/>
</dbReference>
<dbReference type="CCDS" id="CCDS43885.1">
    <molecule id="Q5SRE7-1"/>
</dbReference>
<dbReference type="CCDS" id="CCDS43886.1">
    <molecule id="Q5SRE7-2"/>
</dbReference>
<dbReference type="CCDS" id="CCDS6914.1">
    <molecule id="Q5SRE7-3"/>
</dbReference>
<dbReference type="RefSeq" id="NP_001094346.1">
    <molecule id="Q5SRE7-1"/>
    <property type="nucleotide sequence ID" value="NM_001100876.2"/>
</dbReference>
<dbReference type="RefSeq" id="NP_001094347.1">
    <molecule id="Q5SRE7-2"/>
    <property type="nucleotide sequence ID" value="NM_001100877.1"/>
</dbReference>
<dbReference type="RefSeq" id="NP_777593.2">
    <molecule id="Q5SRE7-3"/>
    <property type="nucleotide sequence ID" value="NM_174933.4"/>
</dbReference>
<dbReference type="PDB" id="2OPW">
    <property type="method" value="X-ray"/>
    <property type="resolution" value="1.90 A"/>
    <property type="chains" value="A=1-291"/>
</dbReference>
<dbReference type="PDB" id="3OBZ">
    <property type="method" value="X-ray"/>
    <property type="resolution" value="2.15 A"/>
    <property type="chains" value="A=1-291"/>
</dbReference>
<dbReference type="PDBsum" id="2OPW"/>
<dbReference type="PDBsum" id="3OBZ"/>
<dbReference type="SMR" id="Q5SRE7"/>
<dbReference type="BioGRID" id="129029">
    <property type="interactions" value="7"/>
</dbReference>
<dbReference type="FunCoup" id="Q5SRE7">
    <property type="interactions" value="246"/>
</dbReference>
<dbReference type="IntAct" id="Q5SRE7">
    <property type="interactions" value="6"/>
</dbReference>
<dbReference type="STRING" id="9606.ENSP00000309515"/>
<dbReference type="GlyGen" id="Q5SRE7">
    <property type="glycosylation" value="1 site, 1 O-linked glycan (1 site)"/>
</dbReference>
<dbReference type="iPTMnet" id="Q5SRE7"/>
<dbReference type="PhosphoSitePlus" id="Q5SRE7"/>
<dbReference type="BioMuta" id="PHYHD1"/>
<dbReference type="DMDM" id="166220781"/>
<dbReference type="jPOST" id="Q5SRE7"/>
<dbReference type="MassIVE" id="Q5SRE7"/>
<dbReference type="PaxDb" id="9606-ENSP00000309515"/>
<dbReference type="PeptideAtlas" id="Q5SRE7"/>
<dbReference type="ProteomicsDB" id="63846">
    <molecule id="Q5SRE7-1"/>
</dbReference>
<dbReference type="ProteomicsDB" id="63847">
    <molecule id="Q5SRE7-2"/>
</dbReference>
<dbReference type="ProteomicsDB" id="63848">
    <molecule id="Q5SRE7-3"/>
</dbReference>
<dbReference type="Pumba" id="Q5SRE7"/>
<dbReference type="Antibodypedia" id="2006">
    <property type="antibodies" value="141 antibodies from 25 providers"/>
</dbReference>
<dbReference type="DNASU" id="254295"/>
<dbReference type="Ensembl" id="ENST00000308941.9">
    <molecule id="Q5SRE7-3"/>
    <property type="protein sequence ID" value="ENSP00000309515.5"/>
    <property type="gene ID" value="ENSG00000175287.19"/>
</dbReference>
<dbReference type="Ensembl" id="ENST00000353176.9">
    <molecule id="Q5SRE7-2"/>
    <property type="protein sequence ID" value="ENSP00000340945.5"/>
    <property type="gene ID" value="ENSG00000175287.19"/>
</dbReference>
<dbReference type="Ensembl" id="ENST00000372592.8">
    <molecule id="Q5SRE7-1"/>
    <property type="protein sequence ID" value="ENSP00000361673.3"/>
    <property type="gene ID" value="ENSG00000175287.19"/>
</dbReference>
<dbReference type="Ensembl" id="ENST00000421063.6">
    <molecule id="Q5SRE7-2"/>
    <property type="protein sequence ID" value="ENSP00000409928.2"/>
    <property type="gene ID" value="ENSG00000175287.19"/>
</dbReference>
<dbReference type="GeneID" id="254295"/>
<dbReference type="KEGG" id="hsa:254295"/>
<dbReference type="MANE-Select" id="ENST00000372592.8">
    <property type="protein sequence ID" value="ENSP00000361673.3"/>
    <property type="RefSeq nucleotide sequence ID" value="NM_001100876.2"/>
    <property type="RefSeq protein sequence ID" value="NP_001094346.1"/>
</dbReference>
<dbReference type="UCSC" id="uc004bwn.3">
    <molecule id="Q5SRE7-1"/>
    <property type="organism name" value="human"/>
</dbReference>
<dbReference type="AGR" id="HGNC:23396"/>
<dbReference type="CTD" id="254295"/>
<dbReference type="DisGeNET" id="254295"/>
<dbReference type="GeneCards" id="PHYHD1"/>
<dbReference type="HGNC" id="HGNC:23396">
    <property type="gene designation" value="PHYHD1"/>
</dbReference>
<dbReference type="HPA" id="ENSG00000175287">
    <property type="expression patterns" value="Low tissue specificity"/>
</dbReference>
<dbReference type="MIM" id="620042">
    <property type="type" value="gene"/>
</dbReference>
<dbReference type="neXtProt" id="NX_Q5SRE7"/>
<dbReference type="OpenTargets" id="ENSG00000175287"/>
<dbReference type="PharmGKB" id="PA134959674"/>
<dbReference type="VEuPathDB" id="HostDB:ENSG00000175287"/>
<dbReference type="eggNOG" id="KOG3290">
    <property type="taxonomic scope" value="Eukaryota"/>
</dbReference>
<dbReference type="GeneTree" id="ENSGT00390000006287"/>
<dbReference type="HOGENOM" id="CLU_048953_0_0_1"/>
<dbReference type="InParanoid" id="Q5SRE7"/>
<dbReference type="OMA" id="KYSEDNW"/>
<dbReference type="OrthoDB" id="445007at2759"/>
<dbReference type="PAN-GO" id="Q5SRE7">
    <property type="GO annotations" value="0 GO annotations based on evolutionary models"/>
</dbReference>
<dbReference type="PhylomeDB" id="Q5SRE7"/>
<dbReference type="TreeFam" id="TF300011"/>
<dbReference type="PathwayCommons" id="Q5SRE7"/>
<dbReference type="SignaLink" id="Q5SRE7"/>
<dbReference type="BioGRID-ORCS" id="254295">
    <property type="hits" value="10 hits in 1147 CRISPR screens"/>
</dbReference>
<dbReference type="ChiTaRS" id="PHYHD1">
    <property type="organism name" value="human"/>
</dbReference>
<dbReference type="EvolutionaryTrace" id="Q5SRE7"/>
<dbReference type="GenomeRNAi" id="254295"/>
<dbReference type="Pharos" id="Q5SRE7">
    <property type="development level" value="Tbio"/>
</dbReference>
<dbReference type="PRO" id="PR:Q5SRE7"/>
<dbReference type="Proteomes" id="UP000005640">
    <property type="component" value="Chromosome 9"/>
</dbReference>
<dbReference type="RNAct" id="Q5SRE7">
    <property type="molecule type" value="protein"/>
</dbReference>
<dbReference type="Bgee" id="ENSG00000175287">
    <property type="expression patterns" value="Expressed in body of pancreas and 156 other cell types or tissues"/>
</dbReference>
<dbReference type="ExpressionAtlas" id="Q5SRE7">
    <property type="expression patterns" value="baseline and differential"/>
</dbReference>
<dbReference type="GO" id="GO:0016706">
    <property type="term" value="F:2-oxoglutarate-dependent dioxygenase activity"/>
    <property type="evidence" value="ECO:0000314"/>
    <property type="project" value="FlyBase"/>
</dbReference>
<dbReference type="GO" id="GO:0046872">
    <property type="term" value="F:metal ion binding"/>
    <property type="evidence" value="ECO:0007669"/>
    <property type="project" value="UniProtKB-KW"/>
</dbReference>
<dbReference type="Gene3D" id="2.60.120.620">
    <property type="entry name" value="q2cbj1_9rhob like domain"/>
    <property type="match status" value="1"/>
</dbReference>
<dbReference type="InterPro" id="IPR008775">
    <property type="entry name" value="Phytyl_CoA_dOase-like"/>
</dbReference>
<dbReference type="PANTHER" id="PTHR20883">
    <property type="entry name" value="PHYTANOYL-COA DIOXYGENASE DOMAIN CONTAINING 1"/>
    <property type="match status" value="1"/>
</dbReference>
<dbReference type="PANTHER" id="PTHR20883:SF15">
    <property type="entry name" value="PHYTANOYL-COA DIOXYGENASE DOMAIN-CONTAINING PROTEIN 1"/>
    <property type="match status" value="1"/>
</dbReference>
<dbReference type="Pfam" id="PF05721">
    <property type="entry name" value="PhyH"/>
    <property type="match status" value="1"/>
</dbReference>
<dbReference type="SUPFAM" id="SSF51197">
    <property type="entry name" value="Clavaminate synthase-like"/>
    <property type="match status" value="1"/>
</dbReference>